<name>ILVB_CYACA</name>
<accession>O19929</accession>
<organism>
    <name type="scientific">Cyanidium caldarium</name>
    <name type="common">Red alga</name>
    <dbReference type="NCBI Taxonomy" id="2771"/>
    <lineage>
        <taxon>Eukaryota</taxon>
        <taxon>Rhodophyta</taxon>
        <taxon>Bangiophyceae</taxon>
        <taxon>Cyanidiales</taxon>
        <taxon>Cyanidiaceae</taxon>
        <taxon>Cyanidium</taxon>
    </lineage>
</organism>
<keyword id="KW-0028">Amino-acid biosynthesis</keyword>
<keyword id="KW-0100">Branched-chain amino acid biosynthesis</keyword>
<keyword id="KW-0150">Chloroplast</keyword>
<keyword id="KW-0274">FAD</keyword>
<keyword id="KW-0285">Flavoprotein</keyword>
<keyword id="KW-0460">Magnesium</keyword>
<keyword id="KW-0479">Metal-binding</keyword>
<keyword id="KW-0934">Plastid</keyword>
<keyword id="KW-0786">Thiamine pyrophosphate</keyword>
<keyword id="KW-0808">Transferase</keyword>
<sequence length="585" mass="65123">MNYKKNSLIKTGAFALIDMLVKHKVKNIFGYPGGAILPIYDELYHWEKKKLIKHYLVRHEQSAAHAADAYARATNEVGVCLATSGPGATNLVTGIATAQMDSVPIIAITGQVSRAFIGTDAFQEVDIFGITLPIVKHSFVVRDPRDISTIVSEAFYISKHGRPGAVLIDVPKDVGLEEFNYHDYDSIRDHKPITKYRPIYGPSIRQIEKFKKMLLESKQPILYVGGGAVMSRAQHEIEELASFIKIPVTTTLMGKGSFNEYNPLYLGMLGMHGTAYANFAVSECDLLIALGARFDDRVTGKLDEFACNAQVIHVDIDPAEIGKNRIPQLAIISDIKIVLKELLSSMKEGTNNMDKNQTQAWLHRIHKWKKEYPLSIPHDSKLLYPQEVINEISQIAQKAFFATDVGQHQMWAAQFLKVEQGKWLSSSGLGTMGYGLPAAIGAKIANPNDLIICITGDASFQMNLQELGTIAQYELDIKIFIINNQWQGMVRQWQQAFYDQRYAHSNMAKGQPDFVQLANSYGIRGIRVTTSKDLKSKIERIISTPGPLLIDCIVATSENCYPMIAPGKSNSQMLGLTKQLKTITN</sequence>
<gene>
    <name type="primary">ilvB</name>
</gene>
<protein>
    <recommendedName>
        <fullName>Acetolactate synthase large subunit</fullName>
        <shortName>AHAS</shortName>
        <ecNumber>2.2.1.6</ecNumber>
    </recommendedName>
    <alternativeName>
        <fullName>Acetohydroxy-acid synthase large subunit</fullName>
        <shortName>ALS</shortName>
    </alternativeName>
</protein>
<evidence type="ECO:0000250" key="1"/>
<evidence type="ECO:0000305" key="2"/>
<reference key="1">
    <citation type="journal article" date="2000" name="J. Mol. Evol.">
        <title>The structure and gene repertoire of an ancient red algal plastid genome.</title>
        <authorList>
            <person name="Gloeckner G."/>
            <person name="Rosenthal A."/>
            <person name="Valentin K.-U."/>
        </authorList>
    </citation>
    <scope>NUCLEOTIDE SEQUENCE [LARGE SCALE GENOMIC DNA]</scope>
    <source>
        <strain>RK-1</strain>
    </source>
</reference>
<comment type="catalytic activity">
    <reaction>
        <text>2 pyruvate + H(+) = (2S)-2-acetolactate + CO2</text>
        <dbReference type="Rhea" id="RHEA:25249"/>
        <dbReference type="ChEBI" id="CHEBI:15361"/>
        <dbReference type="ChEBI" id="CHEBI:15378"/>
        <dbReference type="ChEBI" id="CHEBI:16526"/>
        <dbReference type="ChEBI" id="CHEBI:58476"/>
        <dbReference type="EC" id="2.2.1.6"/>
    </reaction>
</comment>
<comment type="cofactor">
    <cofactor evidence="1">
        <name>Mg(2+)</name>
        <dbReference type="ChEBI" id="CHEBI:18420"/>
    </cofactor>
    <text evidence="1">Binds 1 Mg(2+) ion per subunit.</text>
</comment>
<comment type="cofactor">
    <cofactor evidence="1">
        <name>thiamine diphosphate</name>
        <dbReference type="ChEBI" id="CHEBI:58937"/>
    </cofactor>
    <text evidence="1">Binds 1 thiamine pyrophosphate per subunit.</text>
</comment>
<comment type="pathway">
    <text>Amino-acid biosynthesis; L-isoleucine biosynthesis; L-isoleucine from 2-oxobutanoate: step 1/4.</text>
</comment>
<comment type="pathway">
    <text>Amino-acid biosynthesis; L-valine biosynthesis; L-valine from pyruvate: step 1/4.</text>
</comment>
<comment type="subunit">
    <text evidence="1">Dimer of large and small chains.</text>
</comment>
<comment type="subcellular location">
    <subcellularLocation>
        <location>Plastid</location>
        <location>Chloroplast</location>
    </subcellularLocation>
</comment>
<comment type="similarity">
    <text evidence="2">Belongs to the TPP enzyme family.</text>
</comment>
<feature type="chain" id="PRO_0000090809" description="Acetolactate synthase large subunit">
    <location>
        <begin position="1"/>
        <end position="585"/>
    </location>
</feature>
<feature type="region of interest" description="Thiamine pyrophosphate binding">
    <location>
        <begin position="407"/>
        <end position="486"/>
    </location>
</feature>
<feature type="binding site" evidence="1">
    <location>
        <position position="60"/>
    </location>
    <ligand>
        <name>thiamine diphosphate</name>
        <dbReference type="ChEBI" id="CHEBI:58937"/>
    </ligand>
</feature>
<feature type="binding site" evidence="1">
    <location>
        <position position="162"/>
    </location>
    <ligand>
        <name>FAD</name>
        <dbReference type="ChEBI" id="CHEBI:57692"/>
    </ligand>
</feature>
<feature type="binding site" evidence="1">
    <location>
        <begin position="272"/>
        <end position="293"/>
    </location>
    <ligand>
        <name>FAD</name>
        <dbReference type="ChEBI" id="CHEBI:57692"/>
    </ligand>
</feature>
<feature type="binding site" evidence="1">
    <location>
        <begin position="315"/>
        <end position="334"/>
    </location>
    <ligand>
        <name>FAD</name>
        <dbReference type="ChEBI" id="CHEBI:57692"/>
    </ligand>
</feature>
<feature type="binding site" evidence="1">
    <location>
        <position position="457"/>
    </location>
    <ligand>
        <name>Mg(2+)</name>
        <dbReference type="ChEBI" id="CHEBI:18420"/>
    </ligand>
</feature>
<feature type="binding site" evidence="1">
    <location>
        <position position="484"/>
    </location>
    <ligand>
        <name>Mg(2+)</name>
        <dbReference type="ChEBI" id="CHEBI:18420"/>
    </ligand>
</feature>
<proteinExistence type="inferred from homology"/>
<dbReference type="EC" id="2.2.1.6"/>
<dbReference type="EMBL" id="AF022186">
    <property type="protein sequence ID" value="AAB82660.1"/>
    <property type="molecule type" value="Genomic_DNA"/>
</dbReference>
<dbReference type="PIR" id="T11997">
    <property type="entry name" value="T11997"/>
</dbReference>
<dbReference type="RefSeq" id="NP_045101.1">
    <property type="nucleotide sequence ID" value="NC_001840.1"/>
</dbReference>
<dbReference type="SMR" id="O19929"/>
<dbReference type="GeneID" id="800227"/>
<dbReference type="UniPathway" id="UPA00047">
    <property type="reaction ID" value="UER00055"/>
</dbReference>
<dbReference type="UniPathway" id="UPA00049">
    <property type="reaction ID" value="UER00059"/>
</dbReference>
<dbReference type="GO" id="GO:0005948">
    <property type="term" value="C:acetolactate synthase complex"/>
    <property type="evidence" value="ECO:0007669"/>
    <property type="project" value="TreeGrafter"/>
</dbReference>
<dbReference type="GO" id="GO:0009507">
    <property type="term" value="C:chloroplast"/>
    <property type="evidence" value="ECO:0007669"/>
    <property type="project" value="UniProtKB-SubCell"/>
</dbReference>
<dbReference type="GO" id="GO:0003984">
    <property type="term" value="F:acetolactate synthase activity"/>
    <property type="evidence" value="ECO:0007669"/>
    <property type="project" value="UniProtKB-EC"/>
</dbReference>
<dbReference type="GO" id="GO:0050660">
    <property type="term" value="F:flavin adenine dinucleotide binding"/>
    <property type="evidence" value="ECO:0007669"/>
    <property type="project" value="InterPro"/>
</dbReference>
<dbReference type="GO" id="GO:0000287">
    <property type="term" value="F:magnesium ion binding"/>
    <property type="evidence" value="ECO:0007669"/>
    <property type="project" value="InterPro"/>
</dbReference>
<dbReference type="GO" id="GO:0030976">
    <property type="term" value="F:thiamine pyrophosphate binding"/>
    <property type="evidence" value="ECO:0007669"/>
    <property type="project" value="InterPro"/>
</dbReference>
<dbReference type="GO" id="GO:0009097">
    <property type="term" value="P:isoleucine biosynthetic process"/>
    <property type="evidence" value="ECO:0007669"/>
    <property type="project" value="UniProtKB-UniPathway"/>
</dbReference>
<dbReference type="GO" id="GO:0009099">
    <property type="term" value="P:L-valine biosynthetic process"/>
    <property type="evidence" value="ECO:0007669"/>
    <property type="project" value="UniProtKB-UniPathway"/>
</dbReference>
<dbReference type="CDD" id="cd02015">
    <property type="entry name" value="TPP_AHAS"/>
    <property type="match status" value="1"/>
</dbReference>
<dbReference type="CDD" id="cd07035">
    <property type="entry name" value="TPP_PYR_POX_like"/>
    <property type="match status" value="1"/>
</dbReference>
<dbReference type="FunFam" id="3.40.50.1220:FF:000008">
    <property type="entry name" value="Acetolactate synthase"/>
    <property type="match status" value="1"/>
</dbReference>
<dbReference type="FunFam" id="3.40.50.970:FF:000007">
    <property type="entry name" value="Acetolactate synthase"/>
    <property type="match status" value="1"/>
</dbReference>
<dbReference type="FunFam" id="3.40.50.970:FF:000016">
    <property type="entry name" value="Acetolactate synthase"/>
    <property type="match status" value="1"/>
</dbReference>
<dbReference type="Gene3D" id="3.40.50.970">
    <property type="match status" value="2"/>
</dbReference>
<dbReference type="Gene3D" id="3.40.50.1220">
    <property type="entry name" value="TPP-binding domain"/>
    <property type="match status" value="1"/>
</dbReference>
<dbReference type="InterPro" id="IPR012846">
    <property type="entry name" value="Acetolactate_synth_lsu"/>
</dbReference>
<dbReference type="InterPro" id="IPR039368">
    <property type="entry name" value="AHAS_TPP"/>
</dbReference>
<dbReference type="InterPro" id="IPR029035">
    <property type="entry name" value="DHS-like_NAD/FAD-binding_dom"/>
</dbReference>
<dbReference type="InterPro" id="IPR029061">
    <property type="entry name" value="THDP-binding"/>
</dbReference>
<dbReference type="InterPro" id="IPR012000">
    <property type="entry name" value="Thiamin_PyroP_enz_cen_dom"/>
</dbReference>
<dbReference type="InterPro" id="IPR012001">
    <property type="entry name" value="Thiamin_PyroP_enz_TPP-bd_dom"/>
</dbReference>
<dbReference type="InterPro" id="IPR000399">
    <property type="entry name" value="TPP-bd_CS"/>
</dbReference>
<dbReference type="InterPro" id="IPR045229">
    <property type="entry name" value="TPP_enz"/>
</dbReference>
<dbReference type="InterPro" id="IPR011766">
    <property type="entry name" value="TPP_enzyme_TPP-bd"/>
</dbReference>
<dbReference type="NCBIfam" id="TIGR00118">
    <property type="entry name" value="acolac_lg"/>
    <property type="match status" value="1"/>
</dbReference>
<dbReference type="NCBIfam" id="NF005651">
    <property type="entry name" value="PRK07418.1"/>
    <property type="match status" value="1"/>
</dbReference>
<dbReference type="PANTHER" id="PTHR18968:SF13">
    <property type="entry name" value="ACETOLACTATE SYNTHASE CATALYTIC SUBUNIT, MITOCHONDRIAL"/>
    <property type="match status" value="1"/>
</dbReference>
<dbReference type="PANTHER" id="PTHR18968">
    <property type="entry name" value="THIAMINE PYROPHOSPHATE ENZYMES"/>
    <property type="match status" value="1"/>
</dbReference>
<dbReference type="Pfam" id="PF02775">
    <property type="entry name" value="TPP_enzyme_C"/>
    <property type="match status" value="1"/>
</dbReference>
<dbReference type="Pfam" id="PF00205">
    <property type="entry name" value="TPP_enzyme_M"/>
    <property type="match status" value="1"/>
</dbReference>
<dbReference type="Pfam" id="PF02776">
    <property type="entry name" value="TPP_enzyme_N"/>
    <property type="match status" value="1"/>
</dbReference>
<dbReference type="SUPFAM" id="SSF52467">
    <property type="entry name" value="DHS-like NAD/FAD-binding domain"/>
    <property type="match status" value="1"/>
</dbReference>
<dbReference type="SUPFAM" id="SSF52518">
    <property type="entry name" value="Thiamin diphosphate-binding fold (THDP-binding)"/>
    <property type="match status" value="2"/>
</dbReference>
<dbReference type="PROSITE" id="PS00187">
    <property type="entry name" value="TPP_ENZYMES"/>
    <property type="match status" value="1"/>
</dbReference>
<geneLocation type="chloroplast"/>